<keyword id="KW-0961">Cell wall biogenesis/degradation</keyword>
<keyword id="KW-0378">Hydrolase</keyword>
<keyword id="KW-0677">Repeat</keyword>
<keyword id="KW-0964">Secreted</keyword>
<keyword id="KW-0732">Signal</keyword>
<evidence type="ECO:0000250" key="1"/>
<evidence type="ECO:0000255" key="2"/>
<evidence type="ECO:0000305" key="3"/>
<proteinExistence type="inferred from homology"/>
<accession>P36550</accession>
<dbReference type="EC" id="3.5.1.28"/>
<dbReference type="EMBL" id="D13377">
    <property type="protein sequence ID" value="BAA02647.1"/>
    <property type="molecule type" value="Genomic_DNA"/>
</dbReference>
<dbReference type="PIR" id="S39916">
    <property type="entry name" value="S39916"/>
</dbReference>
<dbReference type="SMR" id="P36550"/>
<dbReference type="GO" id="GO:0005576">
    <property type="term" value="C:extracellular region"/>
    <property type="evidence" value="ECO:0007669"/>
    <property type="project" value="UniProtKB-SubCell"/>
</dbReference>
<dbReference type="GO" id="GO:0008745">
    <property type="term" value="F:N-acetylmuramoyl-L-alanine amidase activity"/>
    <property type="evidence" value="ECO:0007669"/>
    <property type="project" value="UniProtKB-EC"/>
</dbReference>
<dbReference type="GO" id="GO:0071555">
    <property type="term" value="P:cell wall organization"/>
    <property type="evidence" value="ECO:0007669"/>
    <property type="project" value="UniProtKB-KW"/>
</dbReference>
<dbReference type="GO" id="GO:0009253">
    <property type="term" value="P:peptidoglycan catabolic process"/>
    <property type="evidence" value="ECO:0007669"/>
    <property type="project" value="InterPro"/>
</dbReference>
<dbReference type="GO" id="GO:0009254">
    <property type="term" value="P:peptidoglycan turnover"/>
    <property type="evidence" value="ECO:0007669"/>
    <property type="project" value="TreeGrafter"/>
</dbReference>
<dbReference type="CDD" id="cd06583">
    <property type="entry name" value="PGRP"/>
    <property type="match status" value="1"/>
</dbReference>
<dbReference type="Gene3D" id="3.40.80.10">
    <property type="entry name" value="Peptidoglycan recognition protein-like"/>
    <property type="match status" value="1"/>
</dbReference>
<dbReference type="Gene3D" id="1.10.101.10">
    <property type="entry name" value="PGBD-like superfamily/PGBD"/>
    <property type="match status" value="2"/>
</dbReference>
<dbReference type="InterPro" id="IPR036505">
    <property type="entry name" value="Amidase/PGRP_sf"/>
</dbReference>
<dbReference type="InterPro" id="IPR002502">
    <property type="entry name" value="Amidase_domain"/>
</dbReference>
<dbReference type="InterPro" id="IPR051206">
    <property type="entry name" value="NAMLAA_amidase_2"/>
</dbReference>
<dbReference type="InterPro" id="IPR002477">
    <property type="entry name" value="Peptidoglycan-bd-like"/>
</dbReference>
<dbReference type="InterPro" id="IPR036365">
    <property type="entry name" value="PGBD-like_sf"/>
</dbReference>
<dbReference type="InterPro" id="IPR036366">
    <property type="entry name" value="PGBDSf"/>
</dbReference>
<dbReference type="PANTHER" id="PTHR30417">
    <property type="entry name" value="N-ACETYLMURAMOYL-L-ALANINE AMIDASE AMID"/>
    <property type="match status" value="1"/>
</dbReference>
<dbReference type="PANTHER" id="PTHR30417:SF1">
    <property type="entry name" value="N-ACETYLMURAMOYL-L-ALANINE AMIDASE AMID"/>
    <property type="match status" value="1"/>
</dbReference>
<dbReference type="Pfam" id="PF01510">
    <property type="entry name" value="Amidase_2"/>
    <property type="match status" value="1"/>
</dbReference>
<dbReference type="Pfam" id="PF01471">
    <property type="entry name" value="PG_binding_1"/>
    <property type="match status" value="2"/>
</dbReference>
<dbReference type="SMART" id="SM00644">
    <property type="entry name" value="Ami_2"/>
    <property type="match status" value="1"/>
</dbReference>
<dbReference type="SUPFAM" id="SSF55846">
    <property type="entry name" value="N-acetylmuramoyl-L-alanine amidase-like"/>
    <property type="match status" value="1"/>
</dbReference>
<dbReference type="SUPFAM" id="SSF47090">
    <property type="entry name" value="PGBD-like"/>
    <property type="match status" value="2"/>
</dbReference>
<protein>
    <recommendedName>
        <fullName>N-acetylmuramoyl-L-alanine amidase CwlL</fullName>
        <ecNumber>3.5.1.28</ecNumber>
    </recommendedName>
    <alternativeName>
        <fullName>Autolysin</fullName>
    </alternativeName>
    <alternativeName>
        <fullName>Cell wall hydrolase</fullName>
    </alternativeName>
</protein>
<gene>
    <name type="primary">cwlL</name>
</gene>
<feature type="signal peptide" evidence="1">
    <location>
        <begin position="1"/>
        <end position="39"/>
    </location>
</feature>
<feature type="chain" id="PRO_0000006455" description="N-acetylmuramoyl-L-alanine amidase CwlL">
    <location>
        <begin position="40"/>
        <end position="360"/>
    </location>
</feature>
<feature type="domain" description="N-acetylmuramoyl-L-alanine amidase" evidence="2">
    <location>
        <begin position="40"/>
        <end position="154"/>
    </location>
</feature>
<feature type="repeat" description="1-1">
    <location>
        <begin position="166"/>
        <end position="191"/>
    </location>
</feature>
<feature type="repeat" description="2-1">
    <location>
        <begin position="196"/>
        <end position="259"/>
    </location>
</feature>
<feature type="repeat" description="1-2">
    <location>
        <begin position="265"/>
        <end position="289"/>
    </location>
</feature>
<feature type="repeat" description="2-2">
    <location>
        <begin position="291"/>
        <end position="355"/>
    </location>
</feature>
<feature type="region of interest" description="2 X approximate repeats">
    <location>
        <begin position="166"/>
        <end position="289"/>
    </location>
</feature>
<feature type="region of interest" description="2 X approximate repeats">
    <location>
        <begin position="196"/>
        <end position="355"/>
    </location>
</feature>
<sequence length="360" mass="38996">MVKVVKNFVKVNQYTRPGLKLAGVKGIVMHYTATPGASALNERDYFNGTCIAIKRKASSAHYFVDRKEAQHIIPENEVAYHAHDKNRCYVSFLKPNANTKSISVEMCVEKDGMIHSETVQNAAELVADLCKRYGLSTNKIVRHYDVTNKICPAPWVSDSSQLTTFRKKVDSLLGNKTVSKTTSSTSQSSKSTGTILKKGASGSQVKALQKRLIAAGFSLPKYGADGSYENETVQAVKALQKKAGIAVDGIYGPATEKALAAIGAKKKKPSSNGKKTSYPLPSGIYKVKSPLMKGTGVRQIQEALAALYFYPDKGAKNNGIDGYYGPKTANAVKRFQLMHGLSADGIYGSDTKAKLKTLLK</sequence>
<name>CWLL_BACLI</name>
<reference key="1">
    <citation type="journal article" date="1993" name="Mol. Gen. Genet.">
        <title>Molecular cloning, sequence analysis, and characterization of a new cell wall hydrolase, CwlL, of Bacillus licheniformis.</title>
        <authorList>
            <person name="Oda Y."/>
            <person name="Nakayama R."/>
            <person name="Kuroda A."/>
            <person name="Sekiguchi J."/>
        </authorList>
    </citation>
    <scope>NUCLEOTIDE SEQUENCE [GENOMIC DNA]</scope>
    <source>
        <strain>FD0120</strain>
    </source>
</reference>
<organism>
    <name type="scientific">Bacillus licheniformis</name>
    <dbReference type="NCBI Taxonomy" id="1402"/>
    <lineage>
        <taxon>Bacteria</taxon>
        <taxon>Bacillati</taxon>
        <taxon>Bacillota</taxon>
        <taxon>Bacilli</taxon>
        <taxon>Bacillales</taxon>
        <taxon>Bacillaceae</taxon>
        <taxon>Bacillus</taxon>
    </lineage>
</organism>
<comment type="catalytic activity">
    <reaction>
        <text>Hydrolyzes the link between N-acetylmuramoyl residues and L-amino acid residues in certain cell-wall glycopeptides.</text>
        <dbReference type="EC" id="3.5.1.28"/>
    </reaction>
</comment>
<comment type="subcellular location">
    <subcellularLocation>
        <location evidence="3">Secreted</location>
    </subcellularLocation>
</comment>
<comment type="similarity">
    <text evidence="3">Belongs to the N-acetylmuramoyl-L-alanine amidase 2 family.</text>
</comment>